<protein>
    <recommendedName>
        <fullName evidence="1">Single-stranded DNA-binding protein</fullName>
        <shortName evidence="1">SSB</shortName>
    </recommendedName>
</protein>
<feature type="chain" id="PRO_0000096004" description="Single-stranded DNA-binding protein">
    <location>
        <begin position="1"/>
        <end position="168"/>
    </location>
</feature>
<feature type="domain" description="SSB" evidence="1">
    <location>
        <begin position="1"/>
        <end position="104"/>
    </location>
</feature>
<feature type="region of interest" description="Disordered" evidence="2">
    <location>
        <begin position="103"/>
        <end position="168"/>
    </location>
</feature>
<feature type="short sequence motif" description="Important for interaction with partner proteins" evidence="1">
    <location>
        <begin position="163"/>
        <end position="168"/>
    </location>
</feature>
<feature type="compositionally biased region" description="Polar residues" evidence="2">
    <location>
        <begin position="107"/>
        <end position="117"/>
    </location>
</feature>
<evidence type="ECO:0000255" key="1">
    <source>
        <dbReference type="HAMAP-Rule" id="MF_00984"/>
    </source>
</evidence>
<evidence type="ECO:0000256" key="2">
    <source>
        <dbReference type="SAM" id="MobiDB-lite"/>
    </source>
</evidence>
<organism>
    <name type="scientific">Halalkalibacterium halodurans (strain ATCC BAA-125 / DSM 18197 / FERM 7344 / JCM 9153 / C-125)</name>
    <name type="common">Bacillus halodurans</name>
    <dbReference type="NCBI Taxonomy" id="272558"/>
    <lineage>
        <taxon>Bacteria</taxon>
        <taxon>Bacillati</taxon>
        <taxon>Bacillota</taxon>
        <taxon>Bacilli</taxon>
        <taxon>Bacillales</taxon>
        <taxon>Bacillaceae</taxon>
        <taxon>Halalkalibacterium (ex Joshi et al. 2022)</taxon>
    </lineage>
</organism>
<gene>
    <name type="primary">ssb</name>
    <name type="ordered locus">BH4049</name>
</gene>
<dbReference type="EMBL" id="BA000004">
    <property type="protein sequence ID" value="BAB07768.1"/>
    <property type="molecule type" value="Genomic_DNA"/>
</dbReference>
<dbReference type="PIR" id="A84156">
    <property type="entry name" value="A84156"/>
</dbReference>
<dbReference type="RefSeq" id="WP_010900173.1">
    <property type="nucleotide sequence ID" value="NC_002570.2"/>
</dbReference>
<dbReference type="SMR" id="Q9K5N9"/>
<dbReference type="STRING" id="272558.gene:10729967"/>
<dbReference type="KEGG" id="bha:BH4049"/>
<dbReference type="eggNOG" id="COG0629">
    <property type="taxonomic scope" value="Bacteria"/>
</dbReference>
<dbReference type="HOGENOM" id="CLU_078758_6_2_9"/>
<dbReference type="OrthoDB" id="9809878at2"/>
<dbReference type="Proteomes" id="UP000001258">
    <property type="component" value="Chromosome"/>
</dbReference>
<dbReference type="GO" id="GO:0009295">
    <property type="term" value="C:nucleoid"/>
    <property type="evidence" value="ECO:0007669"/>
    <property type="project" value="TreeGrafter"/>
</dbReference>
<dbReference type="GO" id="GO:0003697">
    <property type="term" value="F:single-stranded DNA binding"/>
    <property type="evidence" value="ECO:0007669"/>
    <property type="project" value="UniProtKB-UniRule"/>
</dbReference>
<dbReference type="GO" id="GO:0006310">
    <property type="term" value="P:DNA recombination"/>
    <property type="evidence" value="ECO:0007669"/>
    <property type="project" value="UniProtKB-UniRule"/>
</dbReference>
<dbReference type="GO" id="GO:0006281">
    <property type="term" value="P:DNA repair"/>
    <property type="evidence" value="ECO:0007669"/>
    <property type="project" value="UniProtKB-UniRule"/>
</dbReference>
<dbReference type="GO" id="GO:0006260">
    <property type="term" value="P:DNA replication"/>
    <property type="evidence" value="ECO:0007669"/>
    <property type="project" value="UniProtKB-UniRule"/>
</dbReference>
<dbReference type="CDD" id="cd04496">
    <property type="entry name" value="SSB_OBF"/>
    <property type="match status" value="1"/>
</dbReference>
<dbReference type="FunFam" id="2.40.50.140:FF:000084">
    <property type="entry name" value="Single-stranded DNA-binding protein"/>
    <property type="match status" value="1"/>
</dbReference>
<dbReference type="Gene3D" id="2.40.50.140">
    <property type="entry name" value="Nucleic acid-binding proteins"/>
    <property type="match status" value="1"/>
</dbReference>
<dbReference type="HAMAP" id="MF_00984">
    <property type="entry name" value="SSB"/>
    <property type="match status" value="1"/>
</dbReference>
<dbReference type="InterPro" id="IPR012340">
    <property type="entry name" value="NA-bd_OB-fold"/>
</dbReference>
<dbReference type="InterPro" id="IPR000424">
    <property type="entry name" value="Primosome_PriB/ssb"/>
</dbReference>
<dbReference type="InterPro" id="IPR011344">
    <property type="entry name" value="ssDNA-bd"/>
</dbReference>
<dbReference type="NCBIfam" id="TIGR00621">
    <property type="entry name" value="ssb"/>
    <property type="match status" value="1"/>
</dbReference>
<dbReference type="PANTHER" id="PTHR10302">
    <property type="entry name" value="SINGLE-STRANDED DNA-BINDING PROTEIN"/>
    <property type="match status" value="1"/>
</dbReference>
<dbReference type="PANTHER" id="PTHR10302:SF27">
    <property type="entry name" value="SINGLE-STRANDED DNA-BINDING PROTEIN"/>
    <property type="match status" value="1"/>
</dbReference>
<dbReference type="Pfam" id="PF00436">
    <property type="entry name" value="SSB"/>
    <property type="match status" value="1"/>
</dbReference>
<dbReference type="SUPFAM" id="SSF50249">
    <property type="entry name" value="Nucleic acid-binding proteins"/>
    <property type="match status" value="1"/>
</dbReference>
<dbReference type="PROSITE" id="PS50935">
    <property type="entry name" value="SSB"/>
    <property type="match status" value="1"/>
</dbReference>
<keyword id="KW-0227">DNA damage</keyword>
<keyword id="KW-0233">DNA recombination</keyword>
<keyword id="KW-0234">DNA repair</keyword>
<keyword id="KW-0235">DNA replication</keyword>
<keyword id="KW-0238">DNA-binding</keyword>
<keyword id="KW-1185">Reference proteome</keyword>
<reference key="1">
    <citation type="journal article" date="2000" name="Nucleic Acids Res.">
        <title>Complete genome sequence of the alkaliphilic bacterium Bacillus halodurans and genomic sequence comparison with Bacillus subtilis.</title>
        <authorList>
            <person name="Takami H."/>
            <person name="Nakasone K."/>
            <person name="Takaki Y."/>
            <person name="Maeno G."/>
            <person name="Sasaki R."/>
            <person name="Masui N."/>
            <person name="Fuji F."/>
            <person name="Hirama C."/>
            <person name="Nakamura Y."/>
            <person name="Ogasawara N."/>
            <person name="Kuhara S."/>
            <person name="Horikoshi K."/>
        </authorList>
    </citation>
    <scope>NUCLEOTIDE SEQUENCE [LARGE SCALE GENOMIC DNA]</scope>
    <source>
        <strain>ATCC BAA-125 / DSM 18197 / FERM 7344 / JCM 9153 / C-125</strain>
    </source>
</reference>
<accession>Q9K5N9</accession>
<proteinExistence type="inferred from homology"/>
<sequence>MLNRVVLVGRLTRDPELRYTPNGVAVANFTLAVNRPFSNQQGEREADFINCVVWRKQAENVANYLKKGSLAGVDGRIQTRSYDNNEGRRVFVTEVMAESVQFLEPRGSQSQGGSNVDNFGGGSPNNPMGGNDFGQQSGGSGRQSGGFSEDPFANDGKPIDISDDDLPF</sequence>
<name>SSB_HALH5</name>
<comment type="function">
    <text evidence="1">Plays an important role in DNA replication, recombination and repair. Binds to ssDNA and to an array of partner proteins to recruit them to their sites of action during DNA metabolism.</text>
</comment>
<comment type="subunit">
    <text evidence="1">Homotetramer.</text>
</comment>